<feature type="chain" id="PRO_0000118747" description="NAD(P)H-quinone oxidoreductase subunit K, chloroplastic">
    <location>
        <begin position="1"/>
        <end position="243"/>
    </location>
</feature>
<feature type="binding site" evidence="1">
    <location>
        <position position="65"/>
    </location>
    <ligand>
        <name>[4Fe-4S] cluster</name>
        <dbReference type="ChEBI" id="CHEBI:49883"/>
    </ligand>
</feature>
<feature type="binding site" evidence="1">
    <location>
        <position position="66"/>
    </location>
    <ligand>
        <name>[4Fe-4S] cluster</name>
        <dbReference type="ChEBI" id="CHEBI:49883"/>
    </ligand>
</feature>
<feature type="binding site" evidence="1">
    <location>
        <position position="130"/>
    </location>
    <ligand>
        <name>[4Fe-4S] cluster</name>
        <dbReference type="ChEBI" id="CHEBI:49883"/>
    </ligand>
</feature>
<feature type="binding site" evidence="1">
    <location>
        <position position="161"/>
    </location>
    <ligand>
        <name>[4Fe-4S] cluster</name>
        <dbReference type="ChEBI" id="CHEBI:49883"/>
    </ligand>
</feature>
<gene>
    <name evidence="1" type="primary">ndhK</name>
    <name type="synonym">psbG</name>
</gene>
<proteinExistence type="inferred from homology"/>
<name>NDHK_MARPO</name>
<protein>
    <recommendedName>
        <fullName evidence="1">NAD(P)H-quinone oxidoreductase subunit K, chloroplastic</fullName>
        <ecNumber evidence="1">7.1.1.-</ecNumber>
    </recommendedName>
    <alternativeName>
        <fullName evidence="1">NAD(P)H dehydrogenase subunit K</fullName>
    </alternativeName>
    <alternativeName>
        <fullName evidence="1">NADH-plastoquinone oxidoreductase subunit K</fullName>
    </alternativeName>
</protein>
<geneLocation type="chloroplast"/>
<accession>P06410</accession>
<reference key="1">
    <citation type="journal article" date="1986" name="Nature">
        <title>Chloroplast gene organization deduced from complete sequence of liverwort Marchantia polymorpha chloroplast DNA.</title>
        <authorList>
            <person name="Ohyama K."/>
            <person name="Fukuzawa H."/>
            <person name="Kohchi T."/>
            <person name="Shirai H."/>
            <person name="Sano T."/>
            <person name="Sano S."/>
            <person name="Umesono K."/>
            <person name="Shiki Y."/>
            <person name="Takeuchi M."/>
            <person name="Chang Z."/>
            <person name="Aota S."/>
            <person name="Inokuchi H."/>
            <person name="Ozeki H."/>
        </authorList>
    </citation>
    <scope>NUCLEOTIDE SEQUENCE [LARGE SCALE GENOMIC DNA]</scope>
</reference>
<reference key="2">
    <citation type="journal article" date="1988" name="J. Mol. Biol.">
        <title>Structure and organization of Marchantia polymorpha chloroplast genome. II. Gene organization of the large single copy region from rps'12 to atpB.</title>
        <authorList>
            <person name="Umesono K."/>
            <person name="Inokuchi H."/>
            <person name="Shiki Y."/>
            <person name="Takeuchi M."/>
            <person name="Chang Z."/>
            <person name="Fukuzawa H."/>
            <person name="Kohchi T."/>
            <person name="Shirai H."/>
            <person name="Ohyama K."/>
            <person name="Ozeki H."/>
        </authorList>
    </citation>
    <scope>NUCLEOTIDE SEQUENCE [GENOMIC DNA]</scope>
</reference>
<keyword id="KW-0004">4Fe-4S</keyword>
<keyword id="KW-0150">Chloroplast</keyword>
<keyword id="KW-0408">Iron</keyword>
<keyword id="KW-0411">Iron-sulfur</keyword>
<keyword id="KW-0472">Membrane</keyword>
<keyword id="KW-0479">Metal-binding</keyword>
<keyword id="KW-0520">NAD</keyword>
<keyword id="KW-0521">NADP</keyword>
<keyword id="KW-0934">Plastid</keyword>
<keyword id="KW-0618">Plastoquinone</keyword>
<keyword id="KW-0874">Quinone</keyword>
<keyword id="KW-0793">Thylakoid</keyword>
<keyword id="KW-1278">Translocase</keyword>
<keyword id="KW-0813">Transport</keyword>
<comment type="function">
    <text evidence="1">NDH shuttles electrons from NAD(P)H:plastoquinone, via FMN and iron-sulfur (Fe-S) centers, to quinones in the photosynthetic chain and possibly in a chloroplast respiratory chain. The immediate electron acceptor for the enzyme in this species is believed to be plastoquinone. Couples the redox reaction to proton translocation, and thus conserves the redox energy in a proton gradient.</text>
</comment>
<comment type="catalytic activity">
    <reaction evidence="1">
        <text>a plastoquinone + NADH + (n+1) H(+)(in) = a plastoquinol + NAD(+) + n H(+)(out)</text>
        <dbReference type="Rhea" id="RHEA:42608"/>
        <dbReference type="Rhea" id="RHEA-COMP:9561"/>
        <dbReference type="Rhea" id="RHEA-COMP:9562"/>
        <dbReference type="ChEBI" id="CHEBI:15378"/>
        <dbReference type="ChEBI" id="CHEBI:17757"/>
        <dbReference type="ChEBI" id="CHEBI:57540"/>
        <dbReference type="ChEBI" id="CHEBI:57945"/>
        <dbReference type="ChEBI" id="CHEBI:62192"/>
    </reaction>
</comment>
<comment type="catalytic activity">
    <reaction evidence="1">
        <text>a plastoquinone + NADPH + (n+1) H(+)(in) = a plastoquinol + NADP(+) + n H(+)(out)</text>
        <dbReference type="Rhea" id="RHEA:42612"/>
        <dbReference type="Rhea" id="RHEA-COMP:9561"/>
        <dbReference type="Rhea" id="RHEA-COMP:9562"/>
        <dbReference type="ChEBI" id="CHEBI:15378"/>
        <dbReference type="ChEBI" id="CHEBI:17757"/>
        <dbReference type="ChEBI" id="CHEBI:57783"/>
        <dbReference type="ChEBI" id="CHEBI:58349"/>
        <dbReference type="ChEBI" id="CHEBI:62192"/>
    </reaction>
</comment>
<comment type="cofactor">
    <cofactor evidence="1">
        <name>[4Fe-4S] cluster</name>
        <dbReference type="ChEBI" id="CHEBI:49883"/>
    </cofactor>
    <text evidence="1">Binds 1 [4Fe-4S] cluster.</text>
</comment>
<comment type="subunit">
    <text evidence="1">NDH is composed of at least 16 different subunits, 5 of which are encoded in the nucleus.</text>
</comment>
<comment type="subcellular location">
    <subcellularLocation>
        <location evidence="1">Plastid</location>
        <location evidence="1">Chloroplast thylakoid membrane</location>
        <topology evidence="1">Peripheral membrane protein</topology>
        <orientation evidence="1">Stromal side</orientation>
    </subcellularLocation>
</comment>
<comment type="similarity">
    <text evidence="1">Belongs to the complex I 20 kDa subunit family.</text>
</comment>
<organism>
    <name type="scientific">Marchantia polymorpha</name>
    <name type="common">Common liverwort</name>
    <name type="synonym">Marchantia aquatica</name>
    <dbReference type="NCBI Taxonomy" id="3197"/>
    <lineage>
        <taxon>Eukaryota</taxon>
        <taxon>Viridiplantae</taxon>
        <taxon>Streptophyta</taxon>
        <taxon>Embryophyta</taxon>
        <taxon>Marchantiophyta</taxon>
        <taxon>Marchantiopsida</taxon>
        <taxon>Marchantiidae</taxon>
        <taxon>Marchantiales</taxon>
        <taxon>Marchantiaceae</taxon>
        <taxon>Marchantia</taxon>
    </lineage>
</organism>
<sequence>MVLNFKFFTCENSLEDNSTTMLKNSIESSFINKTLTNSIILTTFNDFSNWARLSSLWPLLYGTSCCFIEFASLIGSRFDFDRYGLVPRSSPRQADLIITAGTVTMKMAPSLVRLYEQMPEPKYVIAMGACTITGGMFSTDSYTTVRGVDKLIPVDIYLPGCPPKPEAIIDAIIKLRKKIAQEIYEEKKILKKGTRFFTLNHQFNFFSNLDNPKLTSSNQFFQSKKTSKVLLETSLTFKEKENL</sequence>
<dbReference type="EC" id="7.1.1.-" evidence="1"/>
<dbReference type="EMBL" id="X04465">
    <property type="protein sequence ID" value="CAA28088.1"/>
    <property type="molecule type" value="Genomic_DNA"/>
</dbReference>
<dbReference type="PIR" id="A03469">
    <property type="entry name" value="F2LVG"/>
</dbReference>
<dbReference type="RefSeq" id="NP_039302.1">
    <property type="nucleotide sequence ID" value="NC_001319.1"/>
</dbReference>
<dbReference type="SMR" id="P06410"/>
<dbReference type="GeneID" id="2702550"/>
<dbReference type="GO" id="GO:0009535">
    <property type="term" value="C:chloroplast thylakoid membrane"/>
    <property type="evidence" value="ECO:0007669"/>
    <property type="project" value="UniProtKB-SubCell"/>
</dbReference>
<dbReference type="GO" id="GO:0051539">
    <property type="term" value="F:4 iron, 4 sulfur cluster binding"/>
    <property type="evidence" value="ECO:0007669"/>
    <property type="project" value="UniProtKB-KW"/>
</dbReference>
<dbReference type="GO" id="GO:0005506">
    <property type="term" value="F:iron ion binding"/>
    <property type="evidence" value="ECO:0007669"/>
    <property type="project" value="UniProtKB-UniRule"/>
</dbReference>
<dbReference type="GO" id="GO:0008137">
    <property type="term" value="F:NADH dehydrogenase (ubiquinone) activity"/>
    <property type="evidence" value="ECO:0007669"/>
    <property type="project" value="InterPro"/>
</dbReference>
<dbReference type="GO" id="GO:0048038">
    <property type="term" value="F:quinone binding"/>
    <property type="evidence" value="ECO:0007669"/>
    <property type="project" value="UniProtKB-KW"/>
</dbReference>
<dbReference type="GO" id="GO:0019684">
    <property type="term" value="P:photosynthesis, light reaction"/>
    <property type="evidence" value="ECO:0007669"/>
    <property type="project" value="UniProtKB-UniRule"/>
</dbReference>
<dbReference type="FunFam" id="3.40.50.12280:FF:000003">
    <property type="entry name" value="NAD(P)H-quinone oxidoreductase subunit K, chloroplastic"/>
    <property type="match status" value="1"/>
</dbReference>
<dbReference type="Gene3D" id="3.40.50.12280">
    <property type="match status" value="1"/>
</dbReference>
<dbReference type="HAMAP" id="MF_01356">
    <property type="entry name" value="NDH1_NuoB"/>
    <property type="match status" value="1"/>
</dbReference>
<dbReference type="InterPro" id="IPR006137">
    <property type="entry name" value="NADH_UbQ_OxRdtase-like_20kDa"/>
</dbReference>
<dbReference type="InterPro" id="IPR006138">
    <property type="entry name" value="NADH_UQ_OxRdtase_20Kd_su"/>
</dbReference>
<dbReference type="NCBIfam" id="TIGR01957">
    <property type="entry name" value="nuoB_fam"/>
    <property type="match status" value="1"/>
</dbReference>
<dbReference type="NCBIfam" id="NF005012">
    <property type="entry name" value="PRK06411.1"/>
    <property type="match status" value="1"/>
</dbReference>
<dbReference type="PANTHER" id="PTHR11995">
    <property type="entry name" value="NADH DEHYDROGENASE"/>
    <property type="match status" value="1"/>
</dbReference>
<dbReference type="PANTHER" id="PTHR11995:SF14">
    <property type="entry name" value="NADH DEHYDROGENASE [UBIQUINONE] IRON-SULFUR PROTEIN 7, MITOCHONDRIAL"/>
    <property type="match status" value="1"/>
</dbReference>
<dbReference type="Pfam" id="PF01058">
    <property type="entry name" value="Oxidored_q6"/>
    <property type="match status" value="1"/>
</dbReference>
<dbReference type="SUPFAM" id="SSF56770">
    <property type="entry name" value="HydA/Nqo6-like"/>
    <property type="match status" value="1"/>
</dbReference>
<dbReference type="PROSITE" id="PS01150">
    <property type="entry name" value="COMPLEX1_20K"/>
    <property type="match status" value="1"/>
</dbReference>
<evidence type="ECO:0000255" key="1">
    <source>
        <dbReference type="HAMAP-Rule" id="MF_01356"/>
    </source>
</evidence>